<accession>P23267</accession>
<comment type="function">
    <text evidence="3">Odorant receptor.</text>
</comment>
<comment type="subcellular location">
    <subcellularLocation>
        <location>Cell membrane</location>
        <topology>Multi-pass membrane protein</topology>
    </subcellularLocation>
</comment>
<comment type="tissue specificity">
    <text>Olfactory epithelium.</text>
</comment>
<comment type="similarity">
    <text evidence="2">Belongs to the G-protein coupled receptor 1 family.</text>
</comment>
<sequence>MAWSTGQNLSTPGPFILLGFPGPRSMRIGLFLLFLVMYLLTVVGNLAIISLVGAHRCLQTPMYFFLCNLSFLEIWFTTACVPKTLATFAPRGGVISLAGCATQMYFVFSLGCTEYFLLAVMAYDRYLAICLPLRYGGIMTPGLAMRLALGSWLCGFSAITVPATLIARLSFCGSRVINHFFCDISPWIVLSCTDTQVVELVSFGIAFCVILGSCGITLVSYAYIITTIIKIPSARGRHRAFSTCSSHLTVVLIWYGSTIFLHVRTSVESSLDLTKAITVLNTIVTPVLNPFIYTLRNKDVKEALRRTVKGK</sequence>
<dbReference type="EMBL" id="M64378">
    <property type="protein sequence ID" value="AAA41741.1"/>
    <property type="molecule type" value="mRNA"/>
</dbReference>
<dbReference type="PIR" id="C23701">
    <property type="entry name" value="C23701"/>
</dbReference>
<dbReference type="RefSeq" id="NP_775456.1">
    <property type="nucleotide sequence ID" value="NM_173334.1"/>
</dbReference>
<dbReference type="RefSeq" id="XP_017444336.1">
    <property type="nucleotide sequence ID" value="XM_017588847.1"/>
</dbReference>
<dbReference type="RefSeq" id="XP_017444337.1">
    <property type="nucleotide sequence ID" value="XM_017588848.1"/>
</dbReference>
<dbReference type="SMR" id="P23267"/>
<dbReference type="FunCoup" id="P23267">
    <property type="interactions" value="1004"/>
</dbReference>
<dbReference type="STRING" id="10116.ENSRNOP00000064135"/>
<dbReference type="GlyCosmos" id="P23267">
    <property type="glycosylation" value="1 site, No reported glycans"/>
</dbReference>
<dbReference type="GlyGen" id="P23267">
    <property type="glycosylation" value="1 site"/>
</dbReference>
<dbReference type="PaxDb" id="10116-ENSRNOP00000064135"/>
<dbReference type="Ensembl" id="ENSRNOT00000108613.1">
    <property type="protein sequence ID" value="ENSRNOP00000090395.1"/>
    <property type="gene ID" value="ENSRNOG00000067810.1"/>
</dbReference>
<dbReference type="GeneID" id="287001"/>
<dbReference type="KEGG" id="rno:287001"/>
<dbReference type="UCSC" id="RGD:727837">
    <property type="organism name" value="rat"/>
</dbReference>
<dbReference type="AGR" id="RGD:727837"/>
<dbReference type="CTD" id="258511"/>
<dbReference type="RGD" id="727837">
    <property type="gene designation" value="Olr287"/>
</dbReference>
<dbReference type="eggNOG" id="ENOG502SIF0">
    <property type="taxonomic scope" value="Eukaryota"/>
</dbReference>
<dbReference type="GeneTree" id="ENSGT01090000260086"/>
<dbReference type="HOGENOM" id="CLU_012526_1_0_1"/>
<dbReference type="InParanoid" id="P23267"/>
<dbReference type="OMA" id="WFTTACA"/>
<dbReference type="OrthoDB" id="9444602at2759"/>
<dbReference type="PhylomeDB" id="P23267"/>
<dbReference type="PRO" id="PR:P23267"/>
<dbReference type="Proteomes" id="UP000002494">
    <property type="component" value="Chromosome 1"/>
</dbReference>
<dbReference type="GO" id="GO:0005886">
    <property type="term" value="C:plasma membrane"/>
    <property type="evidence" value="ECO:0007669"/>
    <property type="project" value="UniProtKB-SubCell"/>
</dbReference>
<dbReference type="GO" id="GO:0004930">
    <property type="term" value="F:G protein-coupled receptor activity"/>
    <property type="evidence" value="ECO:0007669"/>
    <property type="project" value="UniProtKB-KW"/>
</dbReference>
<dbReference type="GO" id="GO:0004984">
    <property type="term" value="F:olfactory receptor activity"/>
    <property type="evidence" value="ECO:0000318"/>
    <property type="project" value="GO_Central"/>
</dbReference>
<dbReference type="CDD" id="cd13954">
    <property type="entry name" value="7tmA_OR"/>
    <property type="match status" value="1"/>
</dbReference>
<dbReference type="FunFam" id="1.10.1220.70:FF:000001">
    <property type="entry name" value="Olfactory receptor"/>
    <property type="match status" value="1"/>
</dbReference>
<dbReference type="FunFam" id="1.20.1070.10:FF:000010">
    <property type="entry name" value="Olfactory receptor"/>
    <property type="match status" value="1"/>
</dbReference>
<dbReference type="Gene3D" id="1.20.1070.10">
    <property type="entry name" value="Rhodopsin 7-helix transmembrane proteins"/>
    <property type="match status" value="1"/>
</dbReference>
<dbReference type="InterPro" id="IPR000276">
    <property type="entry name" value="GPCR_Rhodpsn"/>
</dbReference>
<dbReference type="InterPro" id="IPR017452">
    <property type="entry name" value="GPCR_Rhodpsn_7TM"/>
</dbReference>
<dbReference type="InterPro" id="IPR000725">
    <property type="entry name" value="Olfact_rcpt"/>
</dbReference>
<dbReference type="InterPro" id="IPR047132">
    <property type="entry name" value="Olfact_rcpt_6C-like"/>
</dbReference>
<dbReference type="PANTHER" id="PTHR26454">
    <property type="entry name" value="OLFACTORY RECEPTOR"/>
    <property type="match status" value="1"/>
</dbReference>
<dbReference type="PANTHER" id="PTHR26454:SF73">
    <property type="entry name" value="OLFACTORY RECEPTOR"/>
    <property type="match status" value="1"/>
</dbReference>
<dbReference type="Pfam" id="PF13853">
    <property type="entry name" value="7tm_4"/>
    <property type="match status" value="1"/>
</dbReference>
<dbReference type="PRINTS" id="PR00237">
    <property type="entry name" value="GPCRRHODOPSN"/>
</dbReference>
<dbReference type="PRINTS" id="PR00245">
    <property type="entry name" value="OLFACTORYR"/>
</dbReference>
<dbReference type="SUPFAM" id="SSF81321">
    <property type="entry name" value="Family A G protein-coupled receptor-like"/>
    <property type="match status" value="1"/>
</dbReference>
<dbReference type="PROSITE" id="PS00237">
    <property type="entry name" value="G_PROTEIN_RECEP_F1_1"/>
    <property type="match status" value="1"/>
</dbReference>
<dbReference type="PROSITE" id="PS50262">
    <property type="entry name" value="G_PROTEIN_RECEP_F1_2"/>
    <property type="match status" value="1"/>
</dbReference>
<proteinExistence type="evidence at transcript level"/>
<keyword id="KW-1003">Cell membrane</keyword>
<keyword id="KW-1015">Disulfide bond</keyword>
<keyword id="KW-0297">G-protein coupled receptor</keyword>
<keyword id="KW-0325">Glycoprotein</keyword>
<keyword id="KW-0472">Membrane</keyword>
<keyword id="KW-0552">Olfaction</keyword>
<keyword id="KW-0675">Receptor</keyword>
<keyword id="KW-1185">Reference proteome</keyword>
<keyword id="KW-0716">Sensory transduction</keyword>
<keyword id="KW-0807">Transducer</keyword>
<keyword id="KW-0812">Transmembrane</keyword>
<keyword id="KW-1133">Transmembrane helix</keyword>
<feature type="chain" id="PRO_0000150871" description="Olfactory receptor 287">
    <location>
        <begin position="1"/>
        <end position="311"/>
    </location>
</feature>
<feature type="topological domain" description="Extracellular" evidence="1">
    <location>
        <begin position="1"/>
        <end position="27"/>
    </location>
</feature>
<feature type="transmembrane region" description="Helical; Name=1" evidence="1">
    <location>
        <begin position="28"/>
        <end position="53"/>
    </location>
</feature>
<feature type="topological domain" description="Cytoplasmic" evidence="1">
    <location>
        <begin position="54"/>
        <end position="60"/>
    </location>
</feature>
<feature type="transmembrane region" description="Helical; Name=2" evidence="1">
    <location>
        <begin position="61"/>
        <end position="82"/>
    </location>
</feature>
<feature type="topological domain" description="Extracellular" evidence="1">
    <location>
        <begin position="83"/>
        <end position="103"/>
    </location>
</feature>
<feature type="transmembrane region" description="Helical; Name=3" evidence="1">
    <location>
        <begin position="104"/>
        <end position="123"/>
    </location>
</feature>
<feature type="topological domain" description="Cytoplasmic" evidence="1">
    <location>
        <begin position="124"/>
        <end position="142"/>
    </location>
</feature>
<feature type="transmembrane region" description="Helical; Name=4" evidence="1">
    <location>
        <begin position="143"/>
        <end position="161"/>
    </location>
</feature>
<feature type="topological domain" description="Extracellular" evidence="1">
    <location>
        <begin position="162"/>
        <end position="199"/>
    </location>
</feature>
<feature type="transmembrane region" description="Helical; Name=5" evidence="1">
    <location>
        <begin position="200"/>
        <end position="222"/>
    </location>
</feature>
<feature type="topological domain" description="Cytoplasmic" evidence="1">
    <location>
        <begin position="223"/>
        <end position="239"/>
    </location>
</feature>
<feature type="transmembrane region" description="Helical; Name=6" evidence="1">
    <location>
        <begin position="240"/>
        <end position="263"/>
    </location>
</feature>
<feature type="topological domain" description="Extracellular" evidence="1">
    <location>
        <begin position="264"/>
        <end position="275"/>
    </location>
</feature>
<feature type="transmembrane region" description="Helical; Name=7" evidence="1">
    <location>
        <begin position="276"/>
        <end position="295"/>
    </location>
</feature>
<feature type="topological domain" description="Cytoplasmic" evidence="1">
    <location>
        <begin position="296"/>
        <end position="311"/>
    </location>
</feature>
<feature type="glycosylation site" description="N-linked (GlcNAc...) asparagine" evidence="1">
    <location>
        <position position="8"/>
    </location>
</feature>
<feature type="disulfide bond" evidence="2">
    <location>
        <begin position="100"/>
        <end position="192"/>
    </location>
</feature>
<protein>
    <recommendedName>
        <fullName>Olfactory receptor 287</fullName>
    </recommendedName>
    <alternativeName>
        <fullName>Olfactory receptor-like protein F6</fullName>
    </alternativeName>
</protein>
<gene>
    <name type="primary">Olr287</name>
</gene>
<reference key="1">
    <citation type="journal article" date="1991" name="Cell">
        <title>A novel multigene family may encode odorant receptors: a molecular basis for odor recognition.</title>
        <authorList>
            <person name="Buck L."/>
            <person name="Axel R."/>
        </authorList>
    </citation>
    <scope>NUCLEOTIDE SEQUENCE [MRNA]</scope>
</reference>
<organism>
    <name type="scientific">Rattus norvegicus</name>
    <name type="common">Rat</name>
    <dbReference type="NCBI Taxonomy" id="10116"/>
    <lineage>
        <taxon>Eukaryota</taxon>
        <taxon>Metazoa</taxon>
        <taxon>Chordata</taxon>
        <taxon>Craniata</taxon>
        <taxon>Vertebrata</taxon>
        <taxon>Euteleostomi</taxon>
        <taxon>Mammalia</taxon>
        <taxon>Eutheria</taxon>
        <taxon>Euarchontoglires</taxon>
        <taxon>Glires</taxon>
        <taxon>Rodentia</taxon>
        <taxon>Myomorpha</taxon>
        <taxon>Muroidea</taxon>
        <taxon>Muridae</taxon>
        <taxon>Murinae</taxon>
        <taxon>Rattus</taxon>
    </lineage>
</organism>
<evidence type="ECO:0000255" key="1"/>
<evidence type="ECO:0000255" key="2">
    <source>
        <dbReference type="PROSITE-ProRule" id="PRU00521"/>
    </source>
</evidence>
<evidence type="ECO:0000305" key="3"/>
<name>OL287_RAT</name>